<dbReference type="EMBL" id="CP000382">
    <property type="protein sequence ID" value="ABK60871.1"/>
    <property type="molecule type" value="Genomic_DNA"/>
</dbReference>
<dbReference type="RefSeq" id="WP_011721213.1">
    <property type="nucleotide sequence ID" value="NC_008593.1"/>
</dbReference>
<dbReference type="SMR" id="A0PXU2"/>
<dbReference type="STRING" id="386415.NT01CX_1111"/>
<dbReference type="KEGG" id="cno:NT01CX_1111"/>
<dbReference type="eggNOG" id="COG0049">
    <property type="taxonomic scope" value="Bacteria"/>
</dbReference>
<dbReference type="HOGENOM" id="CLU_072226_1_1_9"/>
<dbReference type="Proteomes" id="UP000008220">
    <property type="component" value="Chromosome"/>
</dbReference>
<dbReference type="GO" id="GO:0015935">
    <property type="term" value="C:small ribosomal subunit"/>
    <property type="evidence" value="ECO:0007669"/>
    <property type="project" value="InterPro"/>
</dbReference>
<dbReference type="GO" id="GO:0019843">
    <property type="term" value="F:rRNA binding"/>
    <property type="evidence" value="ECO:0007669"/>
    <property type="project" value="UniProtKB-UniRule"/>
</dbReference>
<dbReference type="GO" id="GO:0003735">
    <property type="term" value="F:structural constituent of ribosome"/>
    <property type="evidence" value="ECO:0007669"/>
    <property type="project" value="InterPro"/>
</dbReference>
<dbReference type="GO" id="GO:0000049">
    <property type="term" value="F:tRNA binding"/>
    <property type="evidence" value="ECO:0007669"/>
    <property type="project" value="UniProtKB-UniRule"/>
</dbReference>
<dbReference type="GO" id="GO:0006412">
    <property type="term" value="P:translation"/>
    <property type="evidence" value="ECO:0007669"/>
    <property type="project" value="UniProtKB-UniRule"/>
</dbReference>
<dbReference type="CDD" id="cd14869">
    <property type="entry name" value="uS7_Bacteria"/>
    <property type="match status" value="1"/>
</dbReference>
<dbReference type="FunFam" id="1.10.455.10:FF:000001">
    <property type="entry name" value="30S ribosomal protein S7"/>
    <property type="match status" value="1"/>
</dbReference>
<dbReference type="Gene3D" id="1.10.455.10">
    <property type="entry name" value="Ribosomal protein S7 domain"/>
    <property type="match status" value="1"/>
</dbReference>
<dbReference type="HAMAP" id="MF_00480_B">
    <property type="entry name" value="Ribosomal_uS7_B"/>
    <property type="match status" value="1"/>
</dbReference>
<dbReference type="InterPro" id="IPR000235">
    <property type="entry name" value="Ribosomal_uS7"/>
</dbReference>
<dbReference type="InterPro" id="IPR005717">
    <property type="entry name" value="Ribosomal_uS7_bac/org-type"/>
</dbReference>
<dbReference type="InterPro" id="IPR020606">
    <property type="entry name" value="Ribosomal_uS7_CS"/>
</dbReference>
<dbReference type="InterPro" id="IPR023798">
    <property type="entry name" value="Ribosomal_uS7_dom"/>
</dbReference>
<dbReference type="InterPro" id="IPR036823">
    <property type="entry name" value="Ribosomal_uS7_dom_sf"/>
</dbReference>
<dbReference type="NCBIfam" id="TIGR01029">
    <property type="entry name" value="rpsG_bact"/>
    <property type="match status" value="1"/>
</dbReference>
<dbReference type="PANTHER" id="PTHR11205">
    <property type="entry name" value="RIBOSOMAL PROTEIN S7"/>
    <property type="match status" value="1"/>
</dbReference>
<dbReference type="Pfam" id="PF00177">
    <property type="entry name" value="Ribosomal_S7"/>
    <property type="match status" value="1"/>
</dbReference>
<dbReference type="PIRSF" id="PIRSF002122">
    <property type="entry name" value="RPS7p_RPS7a_RPS5e_RPS7o"/>
    <property type="match status" value="1"/>
</dbReference>
<dbReference type="SUPFAM" id="SSF47973">
    <property type="entry name" value="Ribosomal protein S7"/>
    <property type="match status" value="1"/>
</dbReference>
<dbReference type="PROSITE" id="PS00052">
    <property type="entry name" value="RIBOSOMAL_S7"/>
    <property type="match status" value="1"/>
</dbReference>
<evidence type="ECO:0000255" key="1">
    <source>
        <dbReference type="HAMAP-Rule" id="MF_00480"/>
    </source>
</evidence>
<evidence type="ECO:0000305" key="2"/>
<accession>A0PXU2</accession>
<proteinExistence type="inferred from homology"/>
<sequence>MPRKGNTPKRDVLPDPLYNNKVVAKLINSIMLDGKKGVAQKICYDAFAIMGEKTGKEPLEVFEEAMNNVMPLLEVKARRIGGATYQVPIEVRADRRQTLGIRWIVDASRKRGEKYMRERLAGELLDAANNTGAAVKKREDTHKMAEANKAFAHYRY</sequence>
<keyword id="KW-1185">Reference proteome</keyword>
<keyword id="KW-0687">Ribonucleoprotein</keyword>
<keyword id="KW-0689">Ribosomal protein</keyword>
<keyword id="KW-0694">RNA-binding</keyword>
<keyword id="KW-0699">rRNA-binding</keyword>
<keyword id="KW-0820">tRNA-binding</keyword>
<reference key="1">
    <citation type="journal article" date="2006" name="Nat. Biotechnol.">
        <title>The genome and transcriptomes of the anti-tumor agent Clostridium novyi-NT.</title>
        <authorList>
            <person name="Bettegowda C."/>
            <person name="Huang X."/>
            <person name="Lin J."/>
            <person name="Cheong I."/>
            <person name="Kohli M."/>
            <person name="Szabo S.A."/>
            <person name="Zhang X."/>
            <person name="Diaz L.A. Jr."/>
            <person name="Velculescu V.E."/>
            <person name="Parmigiani G."/>
            <person name="Kinzler K.W."/>
            <person name="Vogelstein B."/>
            <person name="Zhou S."/>
        </authorList>
    </citation>
    <scope>NUCLEOTIDE SEQUENCE [LARGE SCALE GENOMIC DNA]</scope>
    <source>
        <strain>NT</strain>
    </source>
</reference>
<comment type="function">
    <text evidence="1">One of the primary rRNA binding proteins, it binds directly to 16S rRNA where it nucleates assembly of the head domain of the 30S subunit. Is located at the subunit interface close to the decoding center, probably blocks exit of the E-site tRNA.</text>
</comment>
<comment type="subunit">
    <text evidence="1">Part of the 30S ribosomal subunit. Contacts proteins S9 and S11.</text>
</comment>
<comment type="similarity">
    <text evidence="1">Belongs to the universal ribosomal protein uS7 family.</text>
</comment>
<protein>
    <recommendedName>
        <fullName evidence="1">Small ribosomal subunit protein uS7</fullName>
    </recommendedName>
    <alternativeName>
        <fullName evidence="2">30S ribosomal protein S7</fullName>
    </alternativeName>
</protein>
<feature type="chain" id="PRO_1000014179" description="Small ribosomal subunit protein uS7">
    <location>
        <begin position="1"/>
        <end position="156"/>
    </location>
</feature>
<organism>
    <name type="scientific">Clostridium novyi (strain NT)</name>
    <dbReference type="NCBI Taxonomy" id="386415"/>
    <lineage>
        <taxon>Bacteria</taxon>
        <taxon>Bacillati</taxon>
        <taxon>Bacillota</taxon>
        <taxon>Clostridia</taxon>
        <taxon>Eubacteriales</taxon>
        <taxon>Clostridiaceae</taxon>
        <taxon>Clostridium</taxon>
    </lineage>
</organism>
<name>RS7_CLONN</name>
<gene>
    <name evidence="1" type="primary">rpsG</name>
    <name type="ordered locus">NT01CX_1111</name>
</gene>